<dbReference type="EMBL" id="AE014296">
    <property type="protein sequence ID" value="AAF49040.1"/>
    <property type="molecule type" value="Genomic_DNA"/>
</dbReference>
<dbReference type="EMBL" id="BT023262">
    <property type="protein sequence ID" value="AAY55678.1"/>
    <property type="molecule type" value="mRNA"/>
</dbReference>
<dbReference type="RefSeq" id="NP_649202.1">
    <property type="nucleotide sequence ID" value="NM_140945.3"/>
</dbReference>
<dbReference type="SMR" id="Q9VWA8"/>
<dbReference type="BioGRID" id="65491">
    <property type="interactions" value="2"/>
</dbReference>
<dbReference type="DIP" id="DIP-23801N"/>
<dbReference type="FunCoup" id="Q9VWA8">
    <property type="interactions" value="1695"/>
</dbReference>
<dbReference type="IntAct" id="Q9VWA8">
    <property type="interactions" value="2"/>
</dbReference>
<dbReference type="STRING" id="7227.FBpp0074616"/>
<dbReference type="PaxDb" id="7227-FBpp0074616"/>
<dbReference type="DNASU" id="40228"/>
<dbReference type="EnsemblMetazoa" id="FBtr0074847">
    <property type="protein sequence ID" value="FBpp0074616"/>
    <property type="gene ID" value="FBgn0036964"/>
</dbReference>
<dbReference type="GeneID" id="40228"/>
<dbReference type="KEGG" id="dme:Dmel_CG6480"/>
<dbReference type="UCSC" id="CG6480-RA">
    <property type="organism name" value="d. melanogaster"/>
</dbReference>
<dbReference type="AGR" id="FB:FBgn0036964"/>
<dbReference type="CTD" id="2483"/>
<dbReference type="FlyBase" id="FBgn0036964">
    <property type="gene designation" value="FRG1"/>
</dbReference>
<dbReference type="VEuPathDB" id="VectorBase:FBgn0036964"/>
<dbReference type="eggNOG" id="KOG3962">
    <property type="taxonomic scope" value="Eukaryota"/>
</dbReference>
<dbReference type="GeneTree" id="ENSGT00390000004552"/>
<dbReference type="HOGENOM" id="CLU_094616_0_0_1"/>
<dbReference type="InParanoid" id="Q9VWA8"/>
<dbReference type="OMA" id="IEQWEPI"/>
<dbReference type="OrthoDB" id="5539371at2759"/>
<dbReference type="PhylomeDB" id="Q9VWA8"/>
<dbReference type="BioGRID-ORCS" id="40228">
    <property type="hits" value="0 hits in 3 CRISPR screens"/>
</dbReference>
<dbReference type="GenomeRNAi" id="40228"/>
<dbReference type="PRO" id="PR:Q9VWA8"/>
<dbReference type="Proteomes" id="UP000000803">
    <property type="component" value="Chromosome 3L"/>
</dbReference>
<dbReference type="Bgee" id="FBgn0036964">
    <property type="expression patterns" value="Expressed in adult tracheocyte (Drosophila) in ovary and 94 other cell types or tissues"/>
</dbReference>
<dbReference type="GO" id="GO:0015030">
    <property type="term" value="C:Cajal body"/>
    <property type="evidence" value="ECO:0007669"/>
    <property type="project" value="UniProtKB-SubCell"/>
</dbReference>
<dbReference type="GO" id="GO:0071013">
    <property type="term" value="C:catalytic step 2 spliceosome"/>
    <property type="evidence" value="ECO:0000318"/>
    <property type="project" value="GO_Central"/>
</dbReference>
<dbReference type="GO" id="GO:0005737">
    <property type="term" value="C:cytoplasm"/>
    <property type="evidence" value="ECO:0000314"/>
    <property type="project" value="FlyBase"/>
</dbReference>
<dbReference type="GO" id="GO:0005730">
    <property type="term" value="C:nucleolus"/>
    <property type="evidence" value="ECO:0000318"/>
    <property type="project" value="GO_Central"/>
</dbReference>
<dbReference type="GO" id="GO:0055120">
    <property type="term" value="C:striated muscle dense body"/>
    <property type="evidence" value="ECO:0000318"/>
    <property type="project" value="GO_Central"/>
</dbReference>
<dbReference type="GO" id="GO:0030018">
    <property type="term" value="C:Z disc"/>
    <property type="evidence" value="ECO:0007669"/>
    <property type="project" value="UniProtKB-SubCell"/>
</dbReference>
<dbReference type="GO" id="GO:0051015">
    <property type="term" value="F:actin filament binding"/>
    <property type="evidence" value="ECO:0000318"/>
    <property type="project" value="GO_Central"/>
</dbReference>
<dbReference type="GO" id="GO:0070828">
    <property type="term" value="P:heterochromatin organization"/>
    <property type="evidence" value="ECO:0000316"/>
    <property type="project" value="FlyBase"/>
</dbReference>
<dbReference type="GO" id="GO:0007517">
    <property type="term" value="P:muscle organ development"/>
    <property type="evidence" value="ECO:0007669"/>
    <property type="project" value="UniProtKB-KW"/>
</dbReference>
<dbReference type="GO" id="GO:0006364">
    <property type="term" value="P:rRNA processing"/>
    <property type="evidence" value="ECO:0007669"/>
    <property type="project" value="UniProtKB-KW"/>
</dbReference>
<dbReference type="CDD" id="cd23338">
    <property type="entry name" value="beta-trefoil_FSCN_FRG1"/>
    <property type="match status" value="1"/>
</dbReference>
<dbReference type="FunFam" id="2.80.10.50:FF:000061">
    <property type="entry name" value="Protein FRG1"/>
    <property type="match status" value="1"/>
</dbReference>
<dbReference type="Gene3D" id="2.80.10.50">
    <property type="match status" value="1"/>
</dbReference>
<dbReference type="InterPro" id="IPR008999">
    <property type="entry name" value="Actin-crosslinking"/>
</dbReference>
<dbReference type="InterPro" id="IPR010414">
    <property type="entry name" value="FRG1"/>
</dbReference>
<dbReference type="PANTHER" id="PTHR12928">
    <property type="entry name" value="FRG1 PROTEIN"/>
    <property type="match status" value="1"/>
</dbReference>
<dbReference type="PANTHER" id="PTHR12928:SF0">
    <property type="entry name" value="FSHD REGION GENE 1"/>
    <property type="match status" value="1"/>
</dbReference>
<dbReference type="Pfam" id="PF06229">
    <property type="entry name" value="FRG1"/>
    <property type="match status" value="1"/>
</dbReference>
<dbReference type="SUPFAM" id="SSF50405">
    <property type="entry name" value="Actin-crosslinking proteins"/>
    <property type="match status" value="1"/>
</dbReference>
<evidence type="ECO:0000250" key="1"/>
<evidence type="ECO:0000255" key="2"/>
<evidence type="ECO:0000256" key="3">
    <source>
        <dbReference type="SAM" id="MobiDB-lite"/>
    </source>
</evidence>
<evidence type="ECO:0000269" key="4">
    <source>
    </source>
</evidence>
<evidence type="ECO:0000305" key="5"/>
<feature type="chain" id="PRO_0000220771" description="Protein FRG1 homolog">
    <location>
        <begin position="1"/>
        <end position="262"/>
    </location>
</feature>
<feature type="region of interest" description="Disordered" evidence="3">
    <location>
        <begin position="16"/>
        <end position="39"/>
    </location>
</feature>
<feature type="short sequence motif" description="Nuclear localization signal" evidence="2">
    <location>
        <begin position="23"/>
        <end position="39"/>
    </location>
</feature>
<feature type="short sequence motif" description="Bipartite nuclear localization signal" evidence="2">
    <location>
        <begin position="239"/>
        <end position="255"/>
    </location>
</feature>
<feature type="compositionally biased region" description="Basic and acidic residues" evidence="3">
    <location>
        <begin position="28"/>
        <end position="39"/>
    </location>
</feature>
<name>FRG1_DROME</name>
<keyword id="KW-0963">Cytoplasm</keyword>
<keyword id="KW-0517">Myogenesis</keyword>
<keyword id="KW-0539">Nucleus</keyword>
<keyword id="KW-1185">Reference proteome</keyword>
<keyword id="KW-0690">Ribosome biogenesis</keyword>
<keyword id="KW-0698">rRNA processing</keyword>
<organism>
    <name type="scientific">Drosophila melanogaster</name>
    <name type="common">Fruit fly</name>
    <dbReference type="NCBI Taxonomy" id="7227"/>
    <lineage>
        <taxon>Eukaryota</taxon>
        <taxon>Metazoa</taxon>
        <taxon>Ecdysozoa</taxon>
        <taxon>Arthropoda</taxon>
        <taxon>Hexapoda</taxon>
        <taxon>Insecta</taxon>
        <taxon>Pterygota</taxon>
        <taxon>Neoptera</taxon>
        <taxon>Endopterygota</taxon>
        <taxon>Diptera</taxon>
        <taxon>Brachycera</taxon>
        <taxon>Muscomorpha</taxon>
        <taxon>Ephydroidea</taxon>
        <taxon>Drosophilidae</taxon>
        <taxon>Drosophila</taxon>
        <taxon>Sophophora</taxon>
    </lineage>
</organism>
<gene>
    <name type="primary">FRG1</name>
    <name type="ORF">CG6480</name>
</gene>
<proteinExistence type="evidence at transcript level"/>
<reference key="1">
    <citation type="journal article" date="2000" name="Science">
        <title>The genome sequence of Drosophila melanogaster.</title>
        <authorList>
            <person name="Adams M.D."/>
            <person name="Celniker S.E."/>
            <person name="Holt R.A."/>
            <person name="Evans C.A."/>
            <person name="Gocayne J.D."/>
            <person name="Amanatides P.G."/>
            <person name="Scherer S.E."/>
            <person name="Li P.W."/>
            <person name="Hoskins R.A."/>
            <person name="Galle R.F."/>
            <person name="George R.A."/>
            <person name="Lewis S.E."/>
            <person name="Richards S."/>
            <person name="Ashburner M."/>
            <person name="Henderson S.N."/>
            <person name="Sutton G.G."/>
            <person name="Wortman J.R."/>
            <person name="Yandell M.D."/>
            <person name="Zhang Q."/>
            <person name="Chen L.X."/>
            <person name="Brandon R.C."/>
            <person name="Rogers Y.-H.C."/>
            <person name="Blazej R.G."/>
            <person name="Champe M."/>
            <person name="Pfeiffer B.D."/>
            <person name="Wan K.H."/>
            <person name="Doyle C."/>
            <person name="Baxter E.G."/>
            <person name="Helt G."/>
            <person name="Nelson C.R."/>
            <person name="Miklos G.L.G."/>
            <person name="Abril J.F."/>
            <person name="Agbayani A."/>
            <person name="An H.-J."/>
            <person name="Andrews-Pfannkoch C."/>
            <person name="Baldwin D."/>
            <person name="Ballew R.M."/>
            <person name="Basu A."/>
            <person name="Baxendale J."/>
            <person name="Bayraktaroglu L."/>
            <person name="Beasley E.M."/>
            <person name="Beeson K.Y."/>
            <person name="Benos P.V."/>
            <person name="Berman B.P."/>
            <person name="Bhandari D."/>
            <person name="Bolshakov S."/>
            <person name="Borkova D."/>
            <person name="Botchan M.R."/>
            <person name="Bouck J."/>
            <person name="Brokstein P."/>
            <person name="Brottier P."/>
            <person name="Burtis K.C."/>
            <person name="Busam D.A."/>
            <person name="Butler H."/>
            <person name="Cadieu E."/>
            <person name="Center A."/>
            <person name="Chandra I."/>
            <person name="Cherry J.M."/>
            <person name="Cawley S."/>
            <person name="Dahlke C."/>
            <person name="Davenport L.B."/>
            <person name="Davies P."/>
            <person name="de Pablos B."/>
            <person name="Delcher A."/>
            <person name="Deng Z."/>
            <person name="Mays A.D."/>
            <person name="Dew I."/>
            <person name="Dietz S.M."/>
            <person name="Dodson K."/>
            <person name="Doup L.E."/>
            <person name="Downes M."/>
            <person name="Dugan-Rocha S."/>
            <person name="Dunkov B.C."/>
            <person name="Dunn P."/>
            <person name="Durbin K.J."/>
            <person name="Evangelista C.C."/>
            <person name="Ferraz C."/>
            <person name="Ferriera S."/>
            <person name="Fleischmann W."/>
            <person name="Fosler C."/>
            <person name="Gabrielian A.E."/>
            <person name="Garg N.S."/>
            <person name="Gelbart W.M."/>
            <person name="Glasser K."/>
            <person name="Glodek A."/>
            <person name="Gong F."/>
            <person name="Gorrell J.H."/>
            <person name="Gu Z."/>
            <person name="Guan P."/>
            <person name="Harris M."/>
            <person name="Harris N.L."/>
            <person name="Harvey D.A."/>
            <person name="Heiman T.J."/>
            <person name="Hernandez J.R."/>
            <person name="Houck J."/>
            <person name="Hostin D."/>
            <person name="Houston K.A."/>
            <person name="Howland T.J."/>
            <person name="Wei M.-H."/>
            <person name="Ibegwam C."/>
            <person name="Jalali M."/>
            <person name="Kalush F."/>
            <person name="Karpen G.H."/>
            <person name="Ke Z."/>
            <person name="Kennison J.A."/>
            <person name="Ketchum K.A."/>
            <person name="Kimmel B.E."/>
            <person name="Kodira C.D."/>
            <person name="Kraft C.L."/>
            <person name="Kravitz S."/>
            <person name="Kulp D."/>
            <person name="Lai Z."/>
            <person name="Lasko P."/>
            <person name="Lei Y."/>
            <person name="Levitsky A.A."/>
            <person name="Li J.H."/>
            <person name="Li Z."/>
            <person name="Liang Y."/>
            <person name="Lin X."/>
            <person name="Liu X."/>
            <person name="Mattei B."/>
            <person name="McIntosh T.C."/>
            <person name="McLeod M.P."/>
            <person name="McPherson D."/>
            <person name="Merkulov G."/>
            <person name="Milshina N.V."/>
            <person name="Mobarry C."/>
            <person name="Morris J."/>
            <person name="Moshrefi A."/>
            <person name="Mount S.M."/>
            <person name="Moy M."/>
            <person name="Murphy B."/>
            <person name="Murphy L."/>
            <person name="Muzny D.M."/>
            <person name="Nelson D.L."/>
            <person name="Nelson D.R."/>
            <person name="Nelson K.A."/>
            <person name="Nixon K."/>
            <person name="Nusskern D.R."/>
            <person name="Pacleb J.M."/>
            <person name="Palazzolo M."/>
            <person name="Pittman G.S."/>
            <person name="Pan S."/>
            <person name="Pollard J."/>
            <person name="Puri V."/>
            <person name="Reese M.G."/>
            <person name="Reinert K."/>
            <person name="Remington K."/>
            <person name="Saunders R.D.C."/>
            <person name="Scheeler F."/>
            <person name="Shen H."/>
            <person name="Shue B.C."/>
            <person name="Siden-Kiamos I."/>
            <person name="Simpson M."/>
            <person name="Skupski M.P."/>
            <person name="Smith T.J."/>
            <person name="Spier E."/>
            <person name="Spradling A.C."/>
            <person name="Stapleton M."/>
            <person name="Strong R."/>
            <person name="Sun E."/>
            <person name="Svirskas R."/>
            <person name="Tector C."/>
            <person name="Turner R."/>
            <person name="Venter E."/>
            <person name="Wang A.H."/>
            <person name="Wang X."/>
            <person name="Wang Z.-Y."/>
            <person name="Wassarman D.A."/>
            <person name="Weinstock G.M."/>
            <person name="Weissenbach J."/>
            <person name="Williams S.M."/>
            <person name="Woodage T."/>
            <person name="Worley K.C."/>
            <person name="Wu D."/>
            <person name="Yang S."/>
            <person name="Yao Q.A."/>
            <person name="Ye J."/>
            <person name="Yeh R.-F."/>
            <person name="Zaveri J.S."/>
            <person name="Zhan M."/>
            <person name="Zhang G."/>
            <person name="Zhao Q."/>
            <person name="Zheng L."/>
            <person name="Zheng X.H."/>
            <person name="Zhong F.N."/>
            <person name="Zhong W."/>
            <person name="Zhou X."/>
            <person name="Zhu S.C."/>
            <person name="Zhu X."/>
            <person name="Smith H.O."/>
            <person name="Gibbs R.A."/>
            <person name="Myers E.W."/>
            <person name="Rubin G.M."/>
            <person name="Venter J.C."/>
        </authorList>
    </citation>
    <scope>NUCLEOTIDE SEQUENCE [LARGE SCALE GENOMIC DNA]</scope>
    <source>
        <strain>Berkeley</strain>
    </source>
</reference>
<reference key="2">
    <citation type="journal article" date="2002" name="Genome Biol.">
        <title>Annotation of the Drosophila melanogaster euchromatic genome: a systematic review.</title>
        <authorList>
            <person name="Misra S."/>
            <person name="Crosby M.A."/>
            <person name="Mungall C.J."/>
            <person name="Matthews B.B."/>
            <person name="Campbell K.S."/>
            <person name="Hradecky P."/>
            <person name="Huang Y."/>
            <person name="Kaminker J.S."/>
            <person name="Millburn G.H."/>
            <person name="Prochnik S.E."/>
            <person name="Smith C.D."/>
            <person name="Tupy J.L."/>
            <person name="Whitfield E.J."/>
            <person name="Bayraktaroglu L."/>
            <person name="Berman B.P."/>
            <person name="Bettencourt B.R."/>
            <person name="Celniker S.E."/>
            <person name="de Grey A.D.N.J."/>
            <person name="Drysdale R.A."/>
            <person name="Harris N.L."/>
            <person name="Richter J."/>
            <person name="Russo S."/>
            <person name="Schroeder A.J."/>
            <person name="Shu S.Q."/>
            <person name="Stapleton M."/>
            <person name="Yamada C."/>
            <person name="Ashburner M."/>
            <person name="Gelbart W.M."/>
            <person name="Rubin G.M."/>
            <person name="Lewis S.E."/>
        </authorList>
    </citation>
    <scope>GENOME REANNOTATION</scope>
    <source>
        <strain>Berkeley</strain>
    </source>
</reference>
<reference key="3">
    <citation type="submission" date="2005-05" db="EMBL/GenBank/DDBJ databases">
        <authorList>
            <person name="Stapleton M."/>
            <person name="Carlson J.W."/>
            <person name="Chavez C."/>
            <person name="Frise E."/>
            <person name="George R.A."/>
            <person name="Pacleb J.M."/>
            <person name="Park S."/>
            <person name="Wan K.H."/>
            <person name="Yu C."/>
            <person name="Celniker S.E."/>
        </authorList>
    </citation>
    <scope>NUCLEOTIDE SEQUENCE [LARGE SCALE MRNA]</scope>
    <source>
        <strain>Berkeley</strain>
    </source>
</reference>
<reference key="4">
    <citation type="journal article" date="2013" name="J. Mol. Cell Biol.">
        <title>FSHD muscular dystrophy region gene 1 binds Suv4-20h1 histone methyltransferase and impairs myogenesis.</title>
        <authorList>
            <person name="Neguembor M.V."/>
            <person name="Xynos A."/>
            <person name="Onorati M.C."/>
            <person name="Caccia R."/>
            <person name="Bortolanza S."/>
            <person name="Godio C."/>
            <person name="Pistoni M."/>
            <person name="Corona D.F."/>
            <person name="Schotta G."/>
            <person name="Gabellini D."/>
        </authorList>
    </citation>
    <scope>FUNCTION</scope>
    <scope>DISRUPTION PHENOTYPE</scope>
</reference>
<comment type="function">
    <text evidence="1 4">May have a role in processing of pre-rRNA or in the assembly of rRNA into ribosomal subunits (By similarity). May be involved in epigenetic regulation of muscle differentiation through regulation of the activity of the histone-lysine N-methyltransferase Suv4-20.</text>
</comment>
<comment type="subcellular location">
    <subcellularLocation>
        <location evidence="1">Nucleus</location>
        <location evidence="1">Cajal body</location>
    </subcellularLocation>
    <subcellularLocation>
        <location evidence="1">Nucleus</location>
        <location evidence="1">Nucleolus</location>
    </subcellularLocation>
    <subcellularLocation>
        <location evidence="1">Cytoplasm</location>
    </subcellularLocation>
    <subcellularLocation>
        <location evidence="1">Cytoplasm</location>
        <location evidence="1">Myofibril</location>
        <location evidence="1">Sarcomere</location>
        <location evidence="1">Z line</location>
    </subcellularLocation>
</comment>
<comment type="disruption phenotype">
    <text evidence="4">Increased trimethylation of 'Lys-20' of histone H4.</text>
</comment>
<comment type="similarity">
    <text evidence="5">Belongs to the FRG1 family.</text>
</comment>
<sequence>MSDYDHARIKKLVLKGEKLKKSKKRKKEKDEAGSSKKAKVVVDEDAVKHGGWWAAKTAADITGTVSIEFGDRSYLKAMDNGLFTLGAPHNAGDGPDPEEIFTAFPINDRKVAFKSGYGKYLKIEKDGMVTGRSEAVGGMEQWEPVFEEQRMALLSETGHFMSIDPQDDACVALRKKVGQHEICKVRSNASRDVVIDTEPKEEKGDLGEVEKNYVKKFQKFQDKKMRINQNDVKELEQAKAQGSLHETLLDRRSKMKADRYCK</sequence>
<protein>
    <recommendedName>
        <fullName>Protein FRG1 homolog</fullName>
    </recommendedName>
</protein>
<accession>Q9VWA8</accession>
<accession>Q4V3U4</accession>